<accession>Q829W8</accession>
<name>UVRC_STRAW</name>
<organism>
    <name type="scientific">Streptomyces avermitilis (strain ATCC 31267 / DSM 46492 / JCM 5070 / NBRC 14893 / NCIMB 12804 / NRRL 8165 / MA-4680)</name>
    <dbReference type="NCBI Taxonomy" id="227882"/>
    <lineage>
        <taxon>Bacteria</taxon>
        <taxon>Bacillati</taxon>
        <taxon>Actinomycetota</taxon>
        <taxon>Actinomycetes</taxon>
        <taxon>Kitasatosporales</taxon>
        <taxon>Streptomycetaceae</taxon>
        <taxon>Streptomyces</taxon>
    </lineage>
</organism>
<protein>
    <recommendedName>
        <fullName evidence="1">UvrABC system protein C</fullName>
        <shortName evidence="1">Protein UvrC</shortName>
    </recommendedName>
    <alternativeName>
        <fullName evidence="1">Excinuclease ABC subunit C</fullName>
    </alternativeName>
</protein>
<dbReference type="EMBL" id="BA000030">
    <property type="protein sequence ID" value="BAC74002.1"/>
    <property type="molecule type" value="Genomic_DNA"/>
</dbReference>
<dbReference type="RefSeq" id="WP_010987692.1">
    <property type="nucleotide sequence ID" value="NZ_JZJK01000089.1"/>
</dbReference>
<dbReference type="SMR" id="Q829W8"/>
<dbReference type="GeneID" id="41543366"/>
<dbReference type="KEGG" id="sma:SAVERM_6291"/>
<dbReference type="eggNOG" id="COG0322">
    <property type="taxonomic scope" value="Bacteria"/>
</dbReference>
<dbReference type="HOGENOM" id="CLU_014841_1_1_11"/>
<dbReference type="OrthoDB" id="9804933at2"/>
<dbReference type="Proteomes" id="UP000000428">
    <property type="component" value="Chromosome"/>
</dbReference>
<dbReference type="GO" id="GO:0005737">
    <property type="term" value="C:cytoplasm"/>
    <property type="evidence" value="ECO:0007669"/>
    <property type="project" value="UniProtKB-SubCell"/>
</dbReference>
<dbReference type="GO" id="GO:0009380">
    <property type="term" value="C:excinuclease repair complex"/>
    <property type="evidence" value="ECO:0007669"/>
    <property type="project" value="InterPro"/>
</dbReference>
<dbReference type="GO" id="GO:0003677">
    <property type="term" value="F:DNA binding"/>
    <property type="evidence" value="ECO:0007669"/>
    <property type="project" value="UniProtKB-UniRule"/>
</dbReference>
<dbReference type="GO" id="GO:0009381">
    <property type="term" value="F:excinuclease ABC activity"/>
    <property type="evidence" value="ECO:0007669"/>
    <property type="project" value="UniProtKB-UniRule"/>
</dbReference>
<dbReference type="GO" id="GO:0006289">
    <property type="term" value="P:nucleotide-excision repair"/>
    <property type="evidence" value="ECO:0007669"/>
    <property type="project" value="UniProtKB-UniRule"/>
</dbReference>
<dbReference type="GO" id="GO:0009432">
    <property type="term" value="P:SOS response"/>
    <property type="evidence" value="ECO:0007669"/>
    <property type="project" value="UniProtKB-UniRule"/>
</dbReference>
<dbReference type="CDD" id="cd10434">
    <property type="entry name" value="GIY-YIG_UvrC_Cho"/>
    <property type="match status" value="1"/>
</dbReference>
<dbReference type="FunFam" id="3.30.420.340:FF:000003">
    <property type="entry name" value="UvrABC system protein C"/>
    <property type="match status" value="1"/>
</dbReference>
<dbReference type="FunFam" id="3.40.1440.10:FF:000001">
    <property type="entry name" value="UvrABC system protein C"/>
    <property type="match status" value="1"/>
</dbReference>
<dbReference type="Gene3D" id="1.10.150.20">
    <property type="entry name" value="5' to 3' exonuclease, C-terminal subdomain"/>
    <property type="match status" value="1"/>
</dbReference>
<dbReference type="Gene3D" id="3.40.1440.10">
    <property type="entry name" value="GIY-YIG endonuclease"/>
    <property type="match status" value="1"/>
</dbReference>
<dbReference type="Gene3D" id="4.10.860.10">
    <property type="entry name" value="UVR domain"/>
    <property type="match status" value="1"/>
</dbReference>
<dbReference type="Gene3D" id="3.30.420.340">
    <property type="entry name" value="UvrC, RNAse H endonuclease domain"/>
    <property type="match status" value="1"/>
</dbReference>
<dbReference type="HAMAP" id="MF_00203">
    <property type="entry name" value="UvrC"/>
    <property type="match status" value="1"/>
</dbReference>
<dbReference type="InterPro" id="IPR000305">
    <property type="entry name" value="GIY-YIG_endonuc"/>
</dbReference>
<dbReference type="InterPro" id="IPR035901">
    <property type="entry name" value="GIY-YIG_endonuc_sf"/>
</dbReference>
<dbReference type="InterPro" id="IPR047296">
    <property type="entry name" value="GIY-YIG_UvrC_Cho"/>
</dbReference>
<dbReference type="InterPro" id="IPR003583">
    <property type="entry name" value="Hlx-hairpin-Hlx_DNA-bd_motif"/>
</dbReference>
<dbReference type="InterPro" id="IPR010994">
    <property type="entry name" value="RuvA_2-like"/>
</dbReference>
<dbReference type="InterPro" id="IPR001943">
    <property type="entry name" value="UVR_dom"/>
</dbReference>
<dbReference type="InterPro" id="IPR036876">
    <property type="entry name" value="UVR_dom_sf"/>
</dbReference>
<dbReference type="InterPro" id="IPR050066">
    <property type="entry name" value="UvrABC_protein_C"/>
</dbReference>
<dbReference type="InterPro" id="IPR004791">
    <property type="entry name" value="UvrC"/>
</dbReference>
<dbReference type="InterPro" id="IPR001162">
    <property type="entry name" value="UvrC_RNase_H_dom"/>
</dbReference>
<dbReference type="InterPro" id="IPR038476">
    <property type="entry name" value="UvrC_RNase_H_dom_sf"/>
</dbReference>
<dbReference type="NCBIfam" id="NF001824">
    <property type="entry name" value="PRK00558.1-5"/>
    <property type="match status" value="1"/>
</dbReference>
<dbReference type="NCBIfam" id="TIGR00194">
    <property type="entry name" value="uvrC"/>
    <property type="match status" value="1"/>
</dbReference>
<dbReference type="PANTHER" id="PTHR30562:SF1">
    <property type="entry name" value="UVRABC SYSTEM PROTEIN C"/>
    <property type="match status" value="1"/>
</dbReference>
<dbReference type="PANTHER" id="PTHR30562">
    <property type="entry name" value="UVRC/OXIDOREDUCTASE"/>
    <property type="match status" value="1"/>
</dbReference>
<dbReference type="Pfam" id="PF01541">
    <property type="entry name" value="GIY-YIG"/>
    <property type="match status" value="1"/>
</dbReference>
<dbReference type="Pfam" id="PF14520">
    <property type="entry name" value="HHH_5"/>
    <property type="match status" value="1"/>
</dbReference>
<dbReference type="Pfam" id="PF02151">
    <property type="entry name" value="UVR"/>
    <property type="match status" value="1"/>
</dbReference>
<dbReference type="Pfam" id="PF22920">
    <property type="entry name" value="UvrC_RNaseH"/>
    <property type="match status" value="1"/>
</dbReference>
<dbReference type="Pfam" id="PF08459">
    <property type="entry name" value="UvrC_RNaseH_dom"/>
    <property type="match status" value="1"/>
</dbReference>
<dbReference type="SMART" id="SM00465">
    <property type="entry name" value="GIYc"/>
    <property type="match status" value="1"/>
</dbReference>
<dbReference type="SMART" id="SM00278">
    <property type="entry name" value="HhH1"/>
    <property type="match status" value="2"/>
</dbReference>
<dbReference type="SUPFAM" id="SSF46600">
    <property type="entry name" value="C-terminal UvrC-binding domain of UvrB"/>
    <property type="match status" value="1"/>
</dbReference>
<dbReference type="SUPFAM" id="SSF82771">
    <property type="entry name" value="GIY-YIG endonuclease"/>
    <property type="match status" value="1"/>
</dbReference>
<dbReference type="SUPFAM" id="SSF47781">
    <property type="entry name" value="RuvA domain 2-like"/>
    <property type="match status" value="1"/>
</dbReference>
<dbReference type="PROSITE" id="PS50164">
    <property type="entry name" value="GIY_YIG"/>
    <property type="match status" value="1"/>
</dbReference>
<dbReference type="PROSITE" id="PS50151">
    <property type="entry name" value="UVR"/>
    <property type="match status" value="1"/>
</dbReference>
<dbReference type="PROSITE" id="PS50165">
    <property type="entry name" value="UVRC"/>
    <property type="match status" value="1"/>
</dbReference>
<keyword id="KW-0963">Cytoplasm</keyword>
<keyword id="KW-0227">DNA damage</keyword>
<keyword id="KW-0228">DNA excision</keyword>
<keyword id="KW-0234">DNA repair</keyword>
<keyword id="KW-0267">Excision nuclease</keyword>
<keyword id="KW-1185">Reference proteome</keyword>
<keyword id="KW-0742">SOS response</keyword>
<reference key="1">
    <citation type="journal article" date="2001" name="Proc. Natl. Acad. Sci. U.S.A.">
        <title>Genome sequence of an industrial microorganism Streptomyces avermitilis: deducing the ability of producing secondary metabolites.</title>
        <authorList>
            <person name="Omura S."/>
            <person name="Ikeda H."/>
            <person name="Ishikawa J."/>
            <person name="Hanamoto A."/>
            <person name="Takahashi C."/>
            <person name="Shinose M."/>
            <person name="Takahashi Y."/>
            <person name="Horikawa H."/>
            <person name="Nakazawa H."/>
            <person name="Osonoe T."/>
            <person name="Kikuchi H."/>
            <person name="Shiba T."/>
            <person name="Sakaki Y."/>
            <person name="Hattori M."/>
        </authorList>
    </citation>
    <scope>NUCLEOTIDE SEQUENCE [LARGE SCALE GENOMIC DNA]</scope>
    <source>
        <strain>ATCC 31267 / DSM 46492 / JCM 5070 / NBRC 14893 / NCIMB 12804 / NRRL 8165 / MA-4680</strain>
    </source>
</reference>
<reference key="2">
    <citation type="journal article" date="2003" name="Nat. Biotechnol.">
        <title>Complete genome sequence and comparative analysis of the industrial microorganism Streptomyces avermitilis.</title>
        <authorList>
            <person name="Ikeda H."/>
            <person name="Ishikawa J."/>
            <person name="Hanamoto A."/>
            <person name="Shinose M."/>
            <person name="Kikuchi H."/>
            <person name="Shiba T."/>
            <person name="Sakaki Y."/>
            <person name="Hattori M."/>
            <person name="Omura S."/>
        </authorList>
    </citation>
    <scope>NUCLEOTIDE SEQUENCE [LARGE SCALE GENOMIC DNA]</scope>
    <source>
        <strain>ATCC 31267 / DSM 46492 / JCM 5070 / NBRC 14893 / NCIMB 12804 / NRRL 8165 / MA-4680</strain>
    </source>
</reference>
<comment type="function">
    <text evidence="1">The UvrABC repair system catalyzes the recognition and processing of DNA lesions. UvrC both incises the 5' and 3' sides of the lesion. The N-terminal half is responsible for the 3' incision and the C-terminal half is responsible for the 5' incision.</text>
</comment>
<comment type="subunit">
    <text evidence="1">Interacts with UvrB in an incision complex.</text>
</comment>
<comment type="subcellular location">
    <subcellularLocation>
        <location evidence="1">Cytoplasm</location>
    </subcellularLocation>
</comment>
<comment type="similarity">
    <text evidence="1">Belongs to the UvrC family.</text>
</comment>
<feature type="chain" id="PRO_0000227482" description="UvrABC system protein C">
    <location>
        <begin position="1"/>
        <end position="681"/>
    </location>
</feature>
<feature type="domain" description="GIY-YIG" evidence="1">
    <location>
        <begin position="16"/>
        <end position="95"/>
    </location>
</feature>
<feature type="domain" description="UVR" evidence="1">
    <location>
        <begin position="208"/>
        <end position="243"/>
    </location>
</feature>
<feature type="region of interest" description="Disordered" evidence="2">
    <location>
        <begin position="650"/>
        <end position="681"/>
    </location>
</feature>
<feature type="compositionally biased region" description="Polar residues" evidence="2">
    <location>
        <begin position="660"/>
        <end position="672"/>
    </location>
</feature>
<evidence type="ECO:0000255" key="1">
    <source>
        <dbReference type="HAMAP-Rule" id="MF_00203"/>
    </source>
</evidence>
<evidence type="ECO:0000256" key="2">
    <source>
        <dbReference type="SAM" id="MobiDB-lite"/>
    </source>
</evidence>
<proteinExistence type="inferred from homology"/>
<gene>
    <name evidence="1" type="primary">uvrC</name>
    <name type="ordered locus">SAV_6291</name>
</gene>
<sequence>MADPSSYRPKPGEIPDSPGVYKFRDEHHRVIYVGKAKSLRQRLASYFQDLAGLHPRTRTMVTTAASVEWTVVSTEVEALQLEYSWIKEYDPRFNVKYRDDKSYPYLAVTMNEEFPRVQVMRGHKRKGVRYFGPYGHAWAIRDTVDLLLRVFPVRTCSAGVFKNAARTGRPCLLGYIGKCSAPCVERVSAEEHRELAEEFCDFMAGRTGTYIRRLERQMTDAAEEMEYEKAARLRDDIGALKKAMEKNAVVLADATDADLIAVAEDELEAAVQIFHVRGGRVRGQRGWVTDKVEAVTTADLVEHALQQLYGEETGDSVPKEVLVPALPDPVEPVQEWLTGRRGSIVSLRIPQRGDKKSLMETVQRNAQQSLALHKTKRASDLTTRSRALEEIAEALDLDSAPLRIECYDISHLQGDDVVASMVVFEDGLQRKSEYRRFQIKSFEGQDDVRSMHEVITRRFRRYLSEKERTGEWADGDLKDGELKDDEGRPKRFAYPPQLVVVDGGQPQVAAAKRALDELGIDDIAVCGLAKRLEEVWLPDDGDPVVLPRTSEGLYLLQRVRDEAHRFAITYQRTKRAKRFRASPLDDVAGLGETRKQALIKHFGSVKKLRSATIDQICEVPGIGRKTAETIAVAFAQAAPAVPAVNTATGEIMEDEEPGTTAGSSQEPVSAGTSDERRGQET</sequence>